<dbReference type="EMBL" id="CP001101">
    <property type="protein sequence ID" value="ACE03287.1"/>
    <property type="molecule type" value="Genomic_DNA"/>
</dbReference>
<dbReference type="SMR" id="B3EL60"/>
<dbReference type="STRING" id="331678.Cphamn1_0318"/>
<dbReference type="KEGG" id="cpb:Cphamn1_0318"/>
<dbReference type="eggNOG" id="COG0222">
    <property type="taxonomic scope" value="Bacteria"/>
</dbReference>
<dbReference type="HOGENOM" id="CLU_086499_3_2_10"/>
<dbReference type="OrthoDB" id="9811748at2"/>
<dbReference type="GO" id="GO:0022625">
    <property type="term" value="C:cytosolic large ribosomal subunit"/>
    <property type="evidence" value="ECO:0007669"/>
    <property type="project" value="TreeGrafter"/>
</dbReference>
<dbReference type="GO" id="GO:0003729">
    <property type="term" value="F:mRNA binding"/>
    <property type="evidence" value="ECO:0007669"/>
    <property type="project" value="TreeGrafter"/>
</dbReference>
<dbReference type="GO" id="GO:0003735">
    <property type="term" value="F:structural constituent of ribosome"/>
    <property type="evidence" value="ECO:0007669"/>
    <property type="project" value="InterPro"/>
</dbReference>
<dbReference type="GO" id="GO:0006412">
    <property type="term" value="P:translation"/>
    <property type="evidence" value="ECO:0007669"/>
    <property type="project" value="UniProtKB-UniRule"/>
</dbReference>
<dbReference type="CDD" id="cd00387">
    <property type="entry name" value="Ribosomal_L7_L12"/>
    <property type="match status" value="1"/>
</dbReference>
<dbReference type="FunFam" id="3.30.1390.10:FF:000001">
    <property type="entry name" value="50S ribosomal protein L7/L12"/>
    <property type="match status" value="1"/>
</dbReference>
<dbReference type="Gene3D" id="3.30.1390.10">
    <property type="match status" value="1"/>
</dbReference>
<dbReference type="Gene3D" id="1.20.5.710">
    <property type="entry name" value="Single helix bin"/>
    <property type="match status" value="1"/>
</dbReference>
<dbReference type="HAMAP" id="MF_00368">
    <property type="entry name" value="Ribosomal_bL12"/>
    <property type="match status" value="1"/>
</dbReference>
<dbReference type="InterPro" id="IPR000206">
    <property type="entry name" value="Ribosomal_bL12"/>
</dbReference>
<dbReference type="InterPro" id="IPR013823">
    <property type="entry name" value="Ribosomal_bL12_C"/>
</dbReference>
<dbReference type="InterPro" id="IPR014719">
    <property type="entry name" value="Ribosomal_bL12_C/ClpS-like"/>
</dbReference>
<dbReference type="InterPro" id="IPR008932">
    <property type="entry name" value="Ribosomal_bL12_oligo"/>
</dbReference>
<dbReference type="InterPro" id="IPR036235">
    <property type="entry name" value="Ribosomal_bL12_oligo_N_sf"/>
</dbReference>
<dbReference type="NCBIfam" id="TIGR00855">
    <property type="entry name" value="L12"/>
    <property type="match status" value="1"/>
</dbReference>
<dbReference type="PANTHER" id="PTHR45987">
    <property type="entry name" value="39S RIBOSOMAL PROTEIN L12"/>
    <property type="match status" value="1"/>
</dbReference>
<dbReference type="PANTHER" id="PTHR45987:SF4">
    <property type="entry name" value="LARGE RIBOSOMAL SUBUNIT PROTEIN BL12M"/>
    <property type="match status" value="1"/>
</dbReference>
<dbReference type="Pfam" id="PF00542">
    <property type="entry name" value="Ribosomal_L12"/>
    <property type="match status" value="1"/>
</dbReference>
<dbReference type="Pfam" id="PF16320">
    <property type="entry name" value="Ribosomal_L12_N"/>
    <property type="match status" value="1"/>
</dbReference>
<dbReference type="SUPFAM" id="SSF54736">
    <property type="entry name" value="ClpS-like"/>
    <property type="match status" value="1"/>
</dbReference>
<dbReference type="SUPFAM" id="SSF48300">
    <property type="entry name" value="Ribosomal protein L7/12, oligomerisation (N-terminal) domain"/>
    <property type="match status" value="1"/>
</dbReference>
<proteinExistence type="inferred from homology"/>
<name>RL7_CHLPB</name>
<protein>
    <recommendedName>
        <fullName evidence="1">Large ribosomal subunit protein bL12</fullName>
    </recommendedName>
    <alternativeName>
        <fullName evidence="2">50S ribosomal protein L7/L12</fullName>
    </alternativeName>
</protein>
<reference key="1">
    <citation type="submission" date="2008-06" db="EMBL/GenBank/DDBJ databases">
        <title>Complete sequence of Chlorobium phaeobacteroides BS1.</title>
        <authorList>
            <consortium name="US DOE Joint Genome Institute"/>
            <person name="Lucas S."/>
            <person name="Copeland A."/>
            <person name="Lapidus A."/>
            <person name="Glavina del Rio T."/>
            <person name="Dalin E."/>
            <person name="Tice H."/>
            <person name="Bruce D."/>
            <person name="Goodwin L."/>
            <person name="Pitluck S."/>
            <person name="Schmutz J."/>
            <person name="Larimer F."/>
            <person name="Land M."/>
            <person name="Hauser L."/>
            <person name="Kyrpides N."/>
            <person name="Ovchinnikova G."/>
            <person name="Li T."/>
            <person name="Liu Z."/>
            <person name="Zhao F."/>
            <person name="Overmann J."/>
            <person name="Bryant D.A."/>
            <person name="Richardson P."/>
        </authorList>
    </citation>
    <scope>NUCLEOTIDE SEQUENCE [LARGE SCALE GENOMIC DNA]</scope>
    <source>
        <strain>BS1</strain>
    </source>
</reference>
<gene>
    <name evidence="1" type="primary">rplL</name>
    <name type="ordered locus">Cphamn1_0318</name>
</gene>
<keyword id="KW-0687">Ribonucleoprotein</keyword>
<keyword id="KW-0689">Ribosomal protein</keyword>
<accession>B3EL60</accession>
<feature type="chain" id="PRO_1000121410" description="Large ribosomal subunit protein bL12">
    <location>
        <begin position="1"/>
        <end position="126"/>
    </location>
</feature>
<evidence type="ECO:0000255" key="1">
    <source>
        <dbReference type="HAMAP-Rule" id="MF_00368"/>
    </source>
</evidence>
<evidence type="ECO:0000305" key="2"/>
<comment type="function">
    <text evidence="1">Forms part of the ribosomal stalk which helps the ribosome interact with GTP-bound translation factors. Is thus essential for accurate translation.</text>
</comment>
<comment type="subunit">
    <text evidence="1">Homodimer. Part of the ribosomal stalk of the 50S ribosomal subunit. Forms a multimeric L10(L12)X complex, where L10 forms an elongated spine to which 2 to 4 L12 dimers bind in a sequential fashion. Binds GTP-bound translation factors.</text>
</comment>
<comment type="similarity">
    <text evidence="1">Belongs to the bacterial ribosomal protein bL12 family.</text>
</comment>
<organism>
    <name type="scientific">Chlorobium phaeobacteroides (strain BS1)</name>
    <dbReference type="NCBI Taxonomy" id="331678"/>
    <lineage>
        <taxon>Bacteria</taxon>
        <taxon>Pseudomonadati</taxon>
        <taxon>Chlorobiota</taxon>
        <taxon>Chlorobiia</taxon>
        <taxon>Chlorobiales</taxon>
        <taxon>Chlorobiaceae</taxon>
        <taxon>Chlorobium/Pelodictyon group</taxon>
        <taxon>Chlorobium</taxon>
    </lineage>
</organism>
<sequence length="126" mass="13007">MASIEALVEEIGKLSLTEASELVKALEDKFGVSAAPAVFAGAAAAAPGGEAEAKEEQTEFDVELKAVGANKINVIKAVRSITGLGLKEAKEMVDGAPKVVKEAVSKEEAEKVAKELKDAGAEVELK</sequence>